<evidence type="ECO:0000255" key="1">
    <source>
        <dbReference type="HAMAP-Rule" id="MF_01526"/>
    </source>
</evidence>
<name>Y969_BACAA</name>
<organism>
    <name type="scientific">Bacillus anthracis (strain A0248)</name>
    <dbReference type="NCBI Taxonomy" id="592021"/>
    <lineage>
        <taxon>Bacteria</taxon>
        <taxon>Bacillati</taxon>
        <taxon>Bacillota</taxon>
        <taxon>Bacilli</taxon>
        <taxon>Bacillales</taxon>
        <taxon>Bacillaceae</taxon>
        <taxon>Bacillus</taxon>
        <taxon>Bacillus cereus group</taxon>
    </lineage>
</organism>
<sequence>MTKNIHDVAYELQKAIAENDDFKTLKESYAAVQADAASKNLFDEFRTMQLSLQQKMMQGQEITEEDNQQAQEVVVRIQQDAKITKLMETEQRLNVVIGDVNKIIMKPLEELYSAQQQV</sequence>
<comment type="similarity">
    <text evidence="1">Belongs to the UPF0342 family.</text>
</comment>
<accession>C3P1N3</accession>
<gene>
    <name type="ordered locus">BAA_0969</name>
</gene>
<proteinExistence type="inferred from homology"/>
<feature type="chain" id="PRO_1000185136" description="UPF0342 protein BAA_0969">
    <location>
        <begin position="1"/>
        <end position="118"/>
    </location>
</feature>
<reference key="1">
    <citation type="submission" date="2009-04" db="EMBL/GenBank/DDBJ databases">
        <title>Genome sequence of Bacillus anthracis A0248.</title>
        <authorList>
            <person name="Dodson R.J."/>
            <person name="Munk A.C."/>
            <person name="Bruce D."/>
            <person name="Detter C."/>
            <person name="Tapia R."/>
            <person name="Sutton G."/>
            <person name="Sims D."/>
            <person name="Brettin T."/>
        </authorList>
    </citation>
    <scope>NUCLEOTIDE SEQUENCE [LARGE SCALE GENOMIC DNA]</scope>
    <source>
        <strain>A0248</strain>
    </source>
</reference>
<protein>
    <recommendedName>
        <fullName evidence="1">UPF0342 protein BAA_0969</fullName>
    </recommendedName>
</protein>
<dbReference type="EMBL" id="CP001598">
    <property type="protein sequence ID" value="ACQ46901.1"/>
    <property type="molecule type" value="Genomic_DNA"/>
</dbReference>
<dbReference type="RefSeq" id="WP_000164607.1">
    <property type="nucleotide sequence ID" value="NC_012659.1"/>
</dbReference>
<dbReference type="SMR" id="C3P1N3"/>
<dbReference type="GeneID" id="45020930"/>
<dbReference type="KEGG" id="bai:BAA_0969"/>
<dbReference type="HOGENOM" id="CLU_140243_3_0_9"/>
<dbReference type="Gene3D" id="1.20.1500.10">
    <property type="entry name" value="YheA/YmcA-like"/>
    <property type="match status" value="1"/>
</dbReference>
<dbReference type="HAMAP" id="MF_01526">
    <property type="entry name" value="UPF0342"/>
    <property type="match status" value="1"/>
</dbReference>
<dbReference type="InterPro" id="IPR010368">
    <property type="entry name" value="Com_YlbF"/>
</dbReference>
<dbReference type="InterPro" id="IPR023378">
    <property type="entry name" value="YheA/YmcA-like_dom_sf"/>
</dbReference>
<dbReference type="NCBIfam" id="NF010211">
    <property type="entry name" value="PRK13676.1-4"/>
    <property type="match status" value="1"/>
</dbReference>
<dbReference type="Pfam" id="PF06133">
    <property type="entry name" value="Com_YlbF"/>
    <property type="match status" value="1"/>
</dbReference>
<dbReference type="SUPFAM" id="SSF158622">
    <property type="entry name" value="YheA/YmcA-like"/>
    <property type="match status" value="1"/>
</dbReference>